<comment type="miscellaneous">
    <text>This protein is expressed by a shufflon (= clustered inversion region that works as a biological switch). The orfs of this region share a constant N-terminus, while the C-terminus is variable.</text>
</comment>
<reference key="1">
    <citation type="journal article" date="1987" name="Nucleic Acids Res.">
        <title>Shufflon: multi-inversion of four contiguous DNA segments of plasmid R64 creates seven different open reading frames.</title>
        <authorList>
            <person name="Komano T."/>
            <person name="Kubo A."/>
            <person name="Nisioka T."/>
        </authorList>
    </citation>
    <scope>NUCLEOTIDE SEQUENCE [GENOMIC DNA]</scope>
    <source>
        <plasmid>IncI1 R64</plasmid>
    </source>
</reference>
<reference key="2">
    <citation type="journal article" date="1989" name="Plasmid">
        <title>Cloning and nucleotide sequence of the ColIb shufflon.</title>
        <authorList>
            <person name="Kim S.-R."/>
            <person name="Komano T."/>
        </authorList>
    </citation>
    <scope>NUCLEOTIDE SEQUENCE [GENOMIC DNA] OF 362-430</scope>
    <source>
        <plasmid>IncI1 ColIb-P9</plasmid>
    </source>
</reference>
<name>SHU2_ECOLX</name>
<accession>P09746</accession>
<accession>Q9WWA0</accession>
<protein>
    <recommendedName>
        <fullName>Shufflon protein A'</fullName>
    </recommendedName>
</protein>
<organism>
    <name type="scientific">Escherichia coli</name>
    <dbReference type="NCBI Taxonomy" id="562"/>
    <lineage>
        <taxon>Bacteria</taxon>
        <taxon>Pseudomonadati</taxon>
        <taxon>Pseudomonadota</taxon>
        <taxon>Gammaproteobacteria</taxon>
        <taxon>Enterobacterales</taxon>
        <taxon>Enterobacteriaceae</taxon>
        <taxon>Escherichia</taxon>
    </lineage>
</organism>
<dbReference type="EMBL" id="AB027308">
    <property type="protein sequence ID" value="BAA77984.1"/>
    <property type="molecule type" value="Genomic_DNA"/>
</dbReference>
<dbReference type="EMBL" id="D90039">
    <property type="protein sequence ID" value="BAA14088.1"/>
    <property type="molecule type" value="Genomic_DNA"/>
</dbReference>
<dbReference type="PIR" id="B26421">
    <property type="entry name" value="B26421"/>
</dbReference>
<dbReference type="RefSeq" id="WP_001417545.1">
    <property type="nucleotide sequence ID" value="NZ_WVVD01000041.1"/>
</dbReference>
<dbReference type="RefSeq" id="YP_009061647.1">
    <property type="nucleotide sequence ID" value="NC_024979.1"/>
</dbReference>
<dbReference type="InterPro" id="IPR029017">
    <property type="entry name" value="Enolase-like_N"/>
</dbReference>
<dbReference type="InterPro" id="IPR007001">
    <property type="entry name" value="Shufflon_N"/>
</dbReference>
<dbReference type="Pfam" id="PF04917">
    <property type="entry name" value="Shufflon_N"/>
    <property type="match status" value="1"/>
</dbReference>
<dbReference type="SUPFAM" id="SSF54826">
    <property type="entry name" value="Enolase N-terminal domain-like"/>
    <property type="match status" value="1"/>
</dbReference>
<feature type="chain" id="PRO_0000097743" description="Shufflon protein A'">
    <location>
        <begin position="1"/>
        <end position="430"/>
    </location>
</feature>
<feature type="region of interest" description="Constant region">
    <location>
        <begin position="1"/>
        <end position="361"/>
    </location>
</feature>
<feature type="region of interest" description="Variable region">
    <location>
        <begin position="362"/>
        <end position="430"/>
    </location>
</feature>
<geneLocation type="plasmid">
    <name>IncI1 R64</name>
</geneLocation>
<geneLocation type="plasmid">
    <name>IncI1 ColIb-P9</name>
</geneLocation>
<proteinExistence type="predicted"/>
<sequence length="430" mass="45760">MKKYDRGWASLETGAALLIVMLLIAWGAGIWQDYIQTKGWQTEARLVSNWTSAARSYIGKNYTTLQGSSTTTTPAVITTTMLKNTGFLSSGFTETNSEGQRLQAYVVRNAQNPELLQAMVVSSGGTPYPVKALIQMAKDITTGLGGYIQDGKTATGALRSWSVALSNYGAKSGNGHIAVLLSTDELSGAAEDTDRLYRFQVNGRPDLNKMHTAIDMGSNNLNNVGAVNAQTGNFSGNVNGVNGTFSGQVKGNSGNFDVNVTAGGDIRSNNGWLITRNSKGWLNETHGGGFYMSDGSWVRSVNNKGIYTGGQVKGGTVRADGRLYTGEYLQLERTAVAGASCSPNGLVGRDNTGAILSCQSGTWGTIGGKLKVTQLSTTGYLGQFDFCAIARMGNAEDAHYCQVVESPAGSRKWYKYEHKTGCIASCVTLN</sequence>
<keyword id="KW-0614">Plasmid</keyword>